<protein>
    <recommendedName>
        <fullName>LIM/homeobox protein Lhx1</fullName>
        <shortName>LIM homeobox protein 1</shortName>
    </recommendedName>
    <alternativeName>
        <fullName>Homeobox protein LMX-2</fullName>
    </alternativeName>
    <alternativeName>
        <fullName>Homeobox protein Lim-1</fullName>
    </alternativeName>
</protein>
<comment type="function">
    <text evidence="1">Potential transcription factor. May play a role in early mesoderm formation and later in lateral mesoderm differentiation and neurogenesis (By similarity).</text>
</comment>
<comment type="subunit">
    <text evidence="1">Interacts with LDB1 via the tandem LIM domains.</text>
</comment>
<comment type="subcellular location">
    <subcellularLocation>
        <location evidence="6">Nucleus</location>
    </subcellularLocation>
</comment>
<comment type="domain">
    <text evidence="1">The LIM domains exert a negative regulatory function and disruption of the LIM domains produces an activated form. In addition, two activation domains and a negative regulatory domain exist C-terminally to the homeobox (By similarity).</text>
</comment>
<name>LHX1_MESAU</name>
<feature type="chain" id="PRO_0000075770" description="LIM/homeobox protein Lhx1">
    <location>
        <begin position="1"/>
        <end position="406"/>
    </location>
</feature>
<feature type="domain" description="LIM zinc-binding 1" evidence="4">
    <location>
        <begin position="4"/>
        <end position="54"/>
    </location>
</feature>
<feature type="domain" description="LIM zinc-binding 2" evidence="4">
    <location>
        <begin position="63"/>
        <end position="117"/>
    </location>
</feature>
<feature type="DNA-binding region" description="Homeobox" evidence="3">
    <location>
        <begin position="180"/>
        <end position="239"/>
    </location>
</feature>
<feature type="region of interest" description="Disordered" evidence="5">
    <location>
        <begin position="128"/>
        <end position="189"/>
    </location>
</feature>
<feature type="region of interest" description="Disordered" evidence="5">
    <location>
        <begin position="294"/>
        <end position="372"/>
    </location>
</feature>
<feature type="compositionally biased region" description="Low complexity" evidence="5">
    <location>
        <begin position="137"/>
        <end position="148"/>
    </location>
</feature>
<feature type="compositionally biased region" description="Basic and acidic residues" evidence="5">
    <location>
        <begin position="151"/>
        <end position="167"/>
    </location>
</feature>
<feature type="compositionally biased region" description="Low complexity" evidence="5">
    <location>
        <begin position="315"/>
        <end position="327"/>
    </location>
</feature>
<feature type="compositionally biased region" description="Pro residues" evidence="5">
    <location>
        <begin position="352"/>
        <end position="362"/>
    </location>
</feature>
<feature type="modified residue" description="Phosphoserine" evidence="2">
    <location>
        <position position="162"/>
    </location>
</feature>
<keyword id="KW-0217">Developmental protein</keyword>
<keyword id="KW-0221">Differentiation</keyword>
<keyword id="KW-0238">DNA-binding</keyword>
<keyword id="KW-0371">Homeobox</keyword>
<keyword id="KW-0440">LIM domain</keyword>
<keyword id="KW-0479">Metal-binding</keyword>
<keyword id="KW-0524">Neurogenesis</keyword>
<keyword id="KW-0539">Nucleus</keyword>
<keyword id="KW-0597">Phosphoprotein</keyword>
<keyword id="KW-1185">Reference proteome</keyword>
<keyword id="KW-0677">Repeat</keyword>
<keyword id="KW-0804">Transcription</keyword>
<keyword id="KW-0805">Transcription regulation</keyword>
<keyword id="KW-0862">Zinc</keyword>
<proteinExistence type="evidence at transcript level"/>
<sequence>MVHCAGCKRPILDRFLLNVLDRAWHVKCVQCCECKCNLTEKCFSREGKLYCKNDFFRCFGTKCAGCAQGISPSDLVRRARSKVFHLNCFTCMMCNKQLSTGEELYIIDENKFVCKEDYLSNSSVAKENSLHSATTGSDPSLSPDSQDPSQDDAKDSESANVSDKEGGSNENDDQNLGAKRRGPRTTIKAKQLETLKAAFAATPKPTRHIREQLAQETGLNMRVIQVWFQNRRSKERRMKQLSALGARRHAFFRSPRRMRPLVDRLEPGELIPNGPFSFYGDYQSEYYGPGGNYDFFPQGPPSSQAQTPVDLPFVPSSGPSGTPLGGLDHPLPGHHPSSEAQRFTDILAHPPGDSPSPEPSLPGPLHSMSAEVFGPSPPFSSLSVNGGASYGNHLSHPPEMNEAAVW</sequence>
<accession>P63008</accession>
<accession>P36199</accession>
<organism>
    <name type="scientific">Mesocricetus auratus</name>
    <name type="common">Golden hamster</name>
    <dbReference type="NCBI Taxonomy" id="10036"/>
    <lineage>
        <taxon>Eukaryota</taxon>
        <taxon>Metazoa</taxon>
        <taxon>Chordata</taxon>
        <taxon>Craniata</taxon>
        <taxon>Vertebrata</taxon>
        <taxon>Euteleostomi</taxon>
        <taxon>Mammalia</taxon>
        <taxon>Eutheria</taxon>
        <taxon>Euarchontoglires</taxon>
        <taxon>Glires</taxon>
        <taxon>Rodentia</taxon>
        <taxon>Myomorpha</taxon>
        <taxon>Muroidea</taxon>
        <taxon>Cricetidae</taxon>
        <taxon>Cricetinae</taxon>
        <taxon>Mesocricetus</taxon>
    </lineage>
</organism>
<reference key="1">
    <citation type="journal article" date="1994" name="Proc. Natl. Acad. Sci. U.S.A.">
        <title>Pancreatic beta cells express a diverse set of homeobox genes.</title>
        <authorList>
            <person name="Rudnick A."/>
            <person name="Ling T.Y."/>
            <person name="Odagiri H."/>
            <person name="Rutter W.J."/>
            <person name="German M.S."/>
        </authorList>
    </citation>
    <scope>NUCLEOTIDE SEQUENCE [MRNA]</scope>
    <source>
        <tissue>Pancreatic islet</tissue>
    </source>
</reference>
<dbReference type="EMBL" id="X81407">
    <property type="protein sequence ID" value="CAA57164.1"/>
    <property type="molecule type" value="mRNA"/>
</dbReference>
<dbReference type="PIR" id="I48186">
    <property type="entry name" value="I48186"/>
</dbReference>
<dbReference type="RefSeq" id="NP_001268538.1">
    <property type="nucleotide sequence ID" value="NM_001281609.1"/>
</dbReference>
<dbReference type="SMR" id="P63008"/>
<dbReference type="STRING" id="10036.ENSMAUP00000003336"/>
<dbReference type="Ensembl" id="ENSMAUT00000004558">
    <property type="protein sequence ID" value="ENSMAUP00000003336"/>
    <property type="gene ID" value="ENSMAUG00000003621"/>
</dbReference>
<dbReference type="GeneID" id="101828732"/>
<dbReference type="KEGG" id="maua:101828732"/>
<dbReference type="CTD" id="3975"/>
<dbReference type="eggNOG" id="KOG0490">
    <property type="taxonomic scope" value="Eukaryota"/>
</dbReference>
<dbReference type="OrthoDB" id="10068367at2759"/>
<dbReference type="Proteomes" id="UP000189706">
    <property type="component" value="Unplaced"/>
</dbReference>
<dbReference type="GO" id="GO:0005634">
    <property type="term" value="C:nucleus"/>
    <property type="evidence" value="ECO:0000250"/>
    <property type="project" value="UniProtKB"/>
</dbReference>
<dbReference type="GO" id="GO:0032991">
    <property type="term" value="C:protein-containing complex"/>
    <property type="evidence" value="ECO:0000250"/>
    <property type="project" value="UniProtKB"/>
</dbReference>
<dbReference type="GO" id="GO:0005667">
    <property type="term" value="C:transcription regulator complex"/>
    <property type="evidence" value="ECO:0007669"/>
    <property type="project" value="Ensembl"/>
</dbReference>
<dbReference type="GO" id="GO:0000987">
    <property type="term" value="F:cis-regulatory region sequence-specific DNA binding"/>
    <property type="evidence" value="ECO:0007669"/>
    <property type="project" value="Ensembl"/>
</dbReference>
<dbReference type="GO" id="GO:0003700">
    <property type="term" value="F:DNA-binding transcription factor activity"/>
    <property type="evidence" value="ECO:0000250"/>
    <property type="project" value="UniProtKB"/>
</dbReference>
<dbReference type="GO" id="GO:0000981">
    <property type="term" value="F:DNA-binding transcription factor activity, RNA polymerase II-specific"/>
    <property type="evidence" value="ECO:0007669"/>
    <property type="project" value="InterPro"/>
</dbReference>
<dbReference type="GO" id="GO:0000977">
    <property type="term" value="F:RNA polymerase II transcription regulatory region sequence-specific DNA binding"/>
    <property type="evidence" value="ECO:0007669"/>
    <property type="project" value="TreeGrafter"/>
</dbReference>
<dbReference type="GO" id="GO:0008270">
    <property type="term" value="F:zinc ion binding"/>
    <property type="evidence" value="ECO:0007669"/>
    <property type="project" value="InterPro"/>
</dbReference>
<dbReference type="GO" id="GO:0048646">
    <property type="term" value="P:anatomical structure formation involved in morphogenesis"/>
    <property type="evidence" value="ECO:0000250"/>
    <property type="project" value="UniProtKB"/>
</dbReference>
<dbReference type="GO" id="GO:0009653">
    <property type="term" value="P:anatomical structure morphogenesis"/>
    <property type="evidence" value="ECO:0000250"/>
    <property type="project" value="UniProtKB"/>
</dbReference>
<dbReference type="GO" id="GO:0009948">
    <property type="term" value="P:anterior/posterior axis specification"/>
    <property type="evidence" value="ECO:0000250"/>
    <property type="project" value="UniProtKB"/>
</dbReference>
<dbReference type="GO" id="GO:0009952">
    <property type="term" value="P:anterior/posterior pattern specification"/>
    <property type="evidence" value="ECO:0000250"/>
    <property type="project" value="UniProtKB"/>
</dbReference>
<dbReference type="GO" id="GO:0001658">
    <property type="term" value="P:branching involved in ureteric bud morphogenesis"/>
    <property type="evidence" value="ECO:0007669"/>
    <property type="project" value="Ensembl"/>
</dbReference>
<dbReference type="GO" id="GO:0007267">
    <property type="term" value="P:cell-cell signaling"/>
    <property type="evidence" value="ECO:0000250"/>
    <property type="project" value="UniProtKB"/>
</dbReference>
<dbReference type="GO" id="GO:0021702">
    <property type="term" value="P:cerebellar Purkinje cell differentiation"/>
    <property type="evidence" value="ECO:0000250"/>
    <property type="project" value="UniProtKB"/>
</dbReference>
<dbReference type="GO" id="GO:0021937">
    <property type="term" value="P:cerebellar Purkinje cell-granule cell precursor cell signaling"/>
    <property type="evidence" value="ECO:0000250"/>
    <property type="project" value="UniProtKB"/>
</dbReference>
<dbReference type="GO" id="GO:0021549">
    <property type="term" value="P:cerebellum development"/>
    <property type="evidence" value="ECO:0000250"/>
    <property type="project" value="UniProtKB"/>
</dbReference>
<dbReference type="GO" id="GO:0060067">
    <property type="term" value="P:cervix development"/>
    <property type="evidence" value="ECO:0000250"/>
    <property type="project" value="UniProtKB"/>
</dbReference>
<dbReference type="GO" id="GO:0072049">
    <property type="term" value="P:comma-shaped body morphogenesis"/>
    <property type="evidence" value="ECO:0000250"/>
    <property type="project" value="UniProtKB"/>
</dbReference>
<dbReference type="GO" id="GO:0097379">
    <property type="term" value="P:dorsal spinal cord interneuron posterior axon guidance"/>
    <property type="evidence" value="ECO:0000250"/>
    <property type="project" value="UniProtKB"/>
</dbReference>
<dbReference type="GO" id="GO:0009953">
    <property type="term" value="P:dorsal/ventral pattern formation"/>
    <property type="evidence" value="ECO:0000250"/>
    <property type="project" value="UniProtKB"/>
</dbReference>
<dbReference type="GO" id="GO:0001705">
    <property type="term" value="P:ectoderm formation"/>
    <property type="evidence" value="ECO:0000250"/>
    <property type="project" value="UniProtKB"/>
</dbReference>
<dbReference type="GO" id="GO:0009880">
    <property type="term" value="P:embryonic pattern specification"/>
    <property type="evidence" value="ECO:0000250"/>
    <property type="project" value="UniProtKB"/>
</dbReference>
<dbReference type="GO" id="GO:0060059">
    <property type="term" value="P:embryonic retina morphogenesis in camera-type eye"/>
    <property type="evidence" value="ECO:0000250"/>
    <property type="project" value="UniProtKB"/>
</dbReference>
<dbReference type="GO" id="GO:0048703">
    <property type="term" value="P:embryonic viscerocranium morphogenesis"/>
    <property type="evidence" value="ECO:0000250"/>
    <property type="project" value="UniProtKB"/>
</dbReference>
<dbReference type="GO" id="GO:0001706">
    <property type="term" value="P:endoderm formation"/>
    <property type="evidence" value="ECO:0000250"/>
    <property type="project" value="UniProtKB"/>
</dbReference>
<dbReference type="GO" id="GO:0060429">
    <property type="term" value="P:epithelium development"/>
    <property type="evidence" value="ECO:0000250"/>
    <property type="project" value="UniProtKB"/>
</dbReference>
<dbReference type="GO" id="GO:0021871">
    <property type="term" value="P:forebrain regionalization"/>
    <property type="evidence" value="ECO:0000250"/>
    <property type="project" value="UniProtKB"/>
</dbReference>
<dbReference type="GO" id="GO:0001702">
    <property type="term" value="P:gastrulation with mouth forming second"/>
    <property type="evidence" value="ECO:0000250"/>
    <property type="project" value="UniProtKB"/>
</dbReference>
<dbReference type="GO" id="GO:0060322">
    <property type="term" value="P:head development"/>
    <property type="evidence" value="ECO:0000250"/>
    <property type="project" value="UniProtKB"/>
</dbReference>
<dbReference type="GO" id="GO:0001822">
    <property type="term" value="P:kidney development"/>
    <property type="evidence" value="ECO:0000250"/>
    <property type="project" value="UniProtKB"/>
</dbReference>
<dbReference type="GO" id="GO:0097477">
    <property type="term" value="P:lateral motor column neuron migration"/>
    <property type="evidence" value="ECO:0000250"/>
    <property type="project" value="UniProtKB"/>
</dbReference>
<dbReference type="GO" id="GO:0048382">
    <property type="term" value="P:mesendoderm development"/>
    <property type="evidence" value="ECO:0007669"/>
    <property type="project" value="Ensembl"/>
</dbReference>
<dbReference type="GO" id="GO:0072283">
    <property type="term" value="P:metanephric renal vesicle morphogenesis"/>
    <property type="evidence" value="ECO:0007669"/>
    <property type="project" value="Ensembl"/>
</dbReference>
<dbReference type="GO" id="GO:0072284">
    <property type="term" value="P:metanephric S-shaped body morphogenesis"/>
    <property type="evidence" value="ECO:0007669"/>
    <property type="project" value="Ensembl"/>
</dbReference>
<dbReference type="GO" id="GO:0008045">
    <property type="term" value="P:motor neuron axon guidance"/>
    <property type="evidence" value="ECO:0000250"/>
    <property type="project" value="UniProtKB"/>
</dbReference>
<dbReference type="GO" id="GO:0045892">
    <property type="term" value="P:negative regulation of DNA-templated transcription"/>
    <property type="evidence" value="ECO:0000250"/>
    <property type="project" value="UniProtKB"/>
</dbReference>
<dbReference type="GO" id="GO:0035849">
    <property type="term" value="P:nephric duct elongation"/>
    <property type="evidence" value="ECO:0007669"/>
    <property type="project" value="Ensembl"/>
</dbReference>
<dbReference type="GO" id="GO:0072178">
    <property type="term" value="P:nephric duct morphogenesis"/>
    <property type="evidence" value="ECO:0000250"/>
    <property type="project" value="UniProtKB"/>
</dbReference>
<dbReference type="GO" id="GO:0060066">
    <property type="term" value="P:oviduct development"/>
    <property type="evidence" value="ECO:0000250"/>
    <property type="project" value="UniProtKB"/>
</dbReference>
<dbReference type="GO" id="GO:0035846">
    <property type="term" value="P:oviduct epithelium development"/>
    <property type="evidence" value="ECO:0000250"/>
    <property type="project" value="UniProtKB"/>
</dbReference>
<dbReference type="GO" id="GO:0061205">
    <property type="term" value="P:paramesonephric duct development"/>
    <property type="evidence" value="ECO:0000250"/>
    <property type="project" value="UniProtKB"/>
</dbReference>
<dbReference type="GO" id="GO:0007389">
    <property type="term" value="P:pattern specification process"/>
    <property type="evidence" value="ECO:0000250"/>
    <property type="project" value="UniProtKB"/>
</dbReference>
<dbReference type="GO" id="GO:2000744">
    <property type="term" value="P:positive regulation of anterior head development"/>
    <property type="evidence" value="ECO:0000250"/>
    <property type="project" value="UniProtKB"/>
</dbReference>
<dbReference type="GO" id="GO:0090190">
    <property type="term" value="P:positive regulation of branching involved in ureteric bud morphogenesis"/>
    <property type="evidence" value="ECO:0000250"/>
    <property type="project" value="UniProtKB"/>
</dbReference>
<dbReference type="GO" id="GO:0045893">
    <property type="term" value="P:positive regulation of DNA-templated transcription"/>
    <property type="evidence" value="ECO:0000250"/>
    <property type="project" value="UniProtKB"/>
</dbReference>
<dbReference type="GO" id="GO:0040019">
    <property type="term" value="P:positive regulation of embryonic development"/>
    <property type="evidence" value="ECO:0000250"/>
    <property type="project" value="UniProtKB"/>
</dbReference>
<dbReference type="GO" id="GO:2000543">
    <property type="term" value="P:positive regulation of gastrulation"/>
    <property type="evidence" value="ECO:0000250"/>
    <property type="project" value="UniProtKB"/>
</dbReference>
<dbReference type="GO" id="GO:2000768">
    <property type="term" value="P:positive regulation of nephron tubule epithelial cell differentiation"/>
    <property type="evidence" value="ECO:0000250"/>
    <property type="project" value="UniProtKB"/>
</dbReference>
<dbReference type="GO" id="GO:0009791">
    <property type="term" value="P:post-embryonic development"/>
    <property type="evidence" value="ECO:0000250"/>
    <property type="project" value="UniProtKB"/>
</dbReference>
<dbReference type="GO" id="GO:0090009">
    <property type="term" value="P:primitive streak formation"/>
    <property type="evidence" value="ECO:0000250"/>
    <property type="project" value="UniProtKB"/>
</dbReference>
<dbReference type="GO" id="GO:0048793">
    <property type="term" value="P:pronephros development"/>
    <property type="evidence" value="ECO:0007669"/>
    <property type="project" value="Ensembl"/>
</dbReference>
<dbReference type="GO" id="GO:0010468">
    <property type="term" value="P:regulation of gene expression"/>
    <property type="evidence" value="ECO:0000250"/>
    <property type="project" value="UniProtKB"/>
</dbReference>
<dbReference type="GO" id="GO:0072077">
    <property type="term" value="P:renal vesicle morphogenesis"/>
    <property type="evidence" value="ECO:0000250"/>
    <property type="project" value="UniProtKB"/>
</dbReference>
<dbReference type="GO" id="GO:0010842">
    <property type="term" value="P:retina layer formation"/>
    <property type="evidence" value="ECO:0000250"/>
    <property type="project" value="UniProtKB"/>
</dbReference>
<dbReference type="GO" id="GO:0072050">
    <property type="term" value="P:S-shaped body morphogenesis"/>
    <property type="evidence" value="ECO:0000250"/>
    <property type="project" value="UniProtKB"/>
</dbReference>
<dbReference type="GO" id="GO:0032525">
    <property type="term" value="P:somite rostral/caudal axis specification"/>
    <property type="evidence" value="ECO:0007669"/>
    <property type="project" value="Ensembl"/>
</dbReference>
<dbReference type="GO" id="GO:0021527">
    <property type="term" value="P:spinal cord association neuron differentiation"/>
    <property type="evidence" value="ECO:0000250"/>
    <property type="project" value="UniProtKB"/>
</dbReference>
<dbReference type="GO" id="GO:0021537">
    <property type="term" value="P:telencephalon development"/>
    <property type="evidence" value="ECO:0007669"/>
    <property type="project" value="Ensembl"/>
</dbReference>
<dbReference type="GO" id="GO:0006366">
    <property type="term" value="P:transcription by RNA polymerase II"/>
    <property type="evidence" value="ECO:0000250"/>
    <property type="project" value="UniProtKB"/>
</dbReference>
<dbReference type="GO" id="GO:0072197">
    <property type="term" value="P:ureter morphogenesis"/>
    <property type="evidence" value="ECO:0007669"/>
    <property type="project" value="Ensembl"/>
</dbReference>
<dbReference type="GO" id="GO:0001657">
    <property type="term" value="P:ureteric bud development"/>
    <property type="evidence" value="ECO:0000250"/>
    <property type="project" value="UniProtKB"/>
</dbReference>
<dbReference type="GO" id="GO:0001655">
    <property type="term" value="P:urogenital system development"/>
    <property type="evidence" value="ECO:0000250"/>
    <property type="project" value="UniProtKB"/>
</dbReference>
<dbReference type="GO" id="GO:0035847">
    <property type="term" value="P:uterine epithelium development"/>
    <property type="evidence" value="ECO:0000250"/>
    <property type="project" value="UniProtKB"/>
</dbReference>
<dbReference type="GO" id="GO:0060065">
    <property type="term" value="P:uterus development"/>
    <property type="evidence" value="ECO:0000250"/>
    <property type="project" value="UniProtKB"/>
</dbReference>
<dbReference type="GO" id="GO:0060068">
    <property type="term" value="P:vagina development"/>
    <property type="evidence" value="ECO:0000250"/>
    <property type="project" value="UniProtKB"/>
</dbReference>
<dbReference type="GO" id="GO:0021517">
    <property type="term" value="P:ventral spinal cord development"/>
    <property type="evidence" value="ECO:0007669"/>
    <property type="project" value="Ensembl"/>
</dbReference>
<dbReference type="CDD" id="cd00086">
    <property type="entry name" value="homeodomain"/>
    <property type="match status" value="1"/>
</dbReference>
<dbReference type="CDD" id="cd09367">
    <property type="entry name" value="LIM1_Lhx1_Lhx5"/>
    <property type="match status" value="1"/>
</dbReference>
<dbReference type="CDD" id="cd09375">
    <property type="entry name" value="LIM2_Lhx1_Lhx5"/>
    <property type="match status" value="1"/>
</dbReference>
<dbReference type="FunFam" id="2.10.110.10:FF:000120">
    <property type="entry name" value="Insulin gene enhancer protein ISL-2"/>
    <property type="match status" value="1"/>
</dbReference>
<dbReference type="FunFam" id="1.10.10.60:FF:000075">
    <property type="entry name" value="LIM/homeobox protein Lhx1"/>
    <property type="match status" value="1"/>
</dbReference>
<dbReference type="FunFam" id="2.10.110.10:FF:000046">
    <property type="entry name" value="LIM/homeobox protein Lhx1"/>
    <property type="match status" value="1"/>
</dbReference>
<dbReference type="Gene3D" id="2.10.110.10">
    <property type="entry name" value="Cysteine Rich Protein"/>
    <property type="match status" value="2"/>
</dbReference>
<dbReference type="Gene3D" id="1.10.10.60">
    <property type="entry name" value="Homeodomain-like"/>
    <property type="match status" value="1"/>
</dbReference>
<dbReference type="InterPro" id="IPR001356">
    <property type="entry name" value="HD"/>
</dbReference>
<dbReference type="InterPro" id="IPR017970">
    <property type="entry name" value="Homeobox_CS"/>
</dbReference>
<dbReference type="InterPro" id="IPR009057">
    <property type="entry name" value="Homeodomain-like_sf"/>
</dbReference>
<dbReference type="InterPro" id="IPR049618">
    <property type="entry name" value="Lhx1/5_LIM1"/>
</dbReference>
<dbReference type="InterPro" id="IPR049619">
    <property type="entry name" value="Lhx1/5_LIM2"/>
</dbReference>
<dbReference type="InterPro" id="IPR050453">
    <property type="entry name" value="LIM_Homeobox_TF"/>
</dbReference>
<dbReference type="InterPro" id="IPR001781">
    <property type="entry name" value="Znf_LIM"/>
</dbReference>
<dbReference type="PANTHER" id="PTHR24208">
    <property type="entry name" value="LIM/HOMEOBOX PROTEIN LHX"/>
    <property type="match status" value="1"/>
</dbReference>
<dbReference type="PANTHER" id="PTHR24208:SF106">
    <property type="entry name" value="LIM_HOMEOBOX PROTEIN LHX1"/>
    <property type="match status" value="1"/>
</dbReference>
<dbReference type="Pfam" id="PF00046">
    <property type="entry name" value="Homeodomain"/>
    <property type="match status" value="1"/>
</dbReference>
<dbReference type="Pfam" id="PF00412">
    <property type="entry name" value="LIM"/>
    <property type="match status" value="2"/>
</dbReference>
<dbReference type="SMART" id="SM00389">
    <property type="entry name" value="HOX"/>
    <property type="match status" value="1"/>
</dbReference>
<dbReference type="SMART" id="SM00132">
    <property type="entry name" value="LIM"/>
    <property type="match status" value="2"/>
</dbReference>
<dbReference type="SUPFAM" id="SSF57716">
    <property type="entry name" value="Glucocorticoid receptor-like (DNA-binding domain)"/>
    <property type="match status" value="2"/>
</dbReference>
<dbReference type="SUPFAM" id="SSF46689">
    <property type="entry name" value="Homeodomain-like"/>
    <property type="match status" value="1"/>
</dbReference>
<dbReference type="PROSITE" id="PS00027">
    <property type="entry name" value="HOMEOBOX_1"/>
    <property type="match status" value="1"/>
</dbReference>
<dbReference type="PROSITE" id="PS50071">
    <property type="entry name" value="HOMEOBOX_2"/>
    <property type="match status" value="1"/>
</dbReference>
<dbReference type="PROSITE" id="PS00478">
    <property type="entry name" value="LIM_DOMAIN_1"/>
    <property type="match status" value="2"/>
</dbReference>
<dbReference type="PROSITE" id="PS50023">
    <property type="entry name" value="LIM_DOMAIN_2"/>
    <property type="match status" value="2"/>
</dbReference>
<evidence type="ECO:0000250" key="1"/>
<evidence type="ECO:0000250" key="2">
    <source>
        <dbReference type="UniProtKB" id="P63007"/>
    </source>
</evidence>
<evidence type="ECO:0000255" key="3">
    <source>
        <dbReference type="PROSITE-ProRule" id="PRU00108"/>
    </source>
</evidence>
<evidence type="ECO:0000255" key="4">
    <source>
        <dbReference type="PROSITE-ProRule" id="PRU00125"/>
    </source>
</evidence>
<evidence type="ECO:0000256" key="5">
    <source>
        <dbReference type="SAM" id="MobiDB-lite"/>
    </source>
</evidence>
<evidence type="ECO:0000305" key="6"/>
<gene>
    <name type="primary">Lhx1</name>
    <name type="synonym">Lim-1</name>
    <name type="synonym">Lim1</name>
    <name type="synonym">Lmx2</name>
</gene>